<proteinExistence type="inferred from homology"/>
<sequence>MRLVFAGTPEPAVPSLRALIESANHEVAAVVTRPDAPAGRGRKLMRSPVGALADEHGIEVLTPAKASDPEFLARLRELEPECCPVVAYGALLRQTALDIPEHGWVNLHFSLLPAWRGAAPVQAAIKHGDQITGASTFRLVPELDAGPVYGVVTEEVRDTDTSGVLLERLSVSGAKLLVATLDGIADGTLRAEEQPADGVSYAPKVEVEDARVDFTAPARAVDRLVRSVTPDPGAWASFRDERLKLGPVSIVDEDLGLAPGEIRVERRRVLAGTGSAPVALGEVQAQGKKRMAATDWARGSRIEQGERLK</sequence>
<feature type="chain" id="PRO_1000020150" description="Methionyl-tRNA formyltransferase">
    <location>
        <begin position="1"/>
        <end position="309"/>
    </location>
</feature>
<feature type="region of interest" description="Disordered" evidence="2">
    <location>
        <begin position="289"/>
        <end position="309"/>
    </location>
</feature>
<feature type="compositionally biased region" description="Basic and acidic residues" evidence="2">
    <location>
        <begin position="298"/>
        <end position="309"/>
    </location>
</feature>
<feature type="binding site" evidence="1">
    <location>
        <begin position="110"/>
        <end position="113"/>
    </location>
    <ligand>
        <name>(6S)-5,6,7,8-tetrahydrofolate</name>
        <dbReference type="ChEBI" id="CHEBI:57453"/>
    </ligand>
</feature>
<protein>
    <recommendedName>
        <fullName evidence="1">Methionyl-tRNA formyltransferase</fullName>
        <ecNumber evidence="1">2.1.2.9</ecNumber>
    </recommendedName>
</protein>
<dbReference type="EC" id="2.1.2.9" evidence="1"/>
<dbReference type="EMBL" id="AM420293">
    <property type="protein sequence ID" value="CAM01419.1"/>
    <property type="molecule type" value="Genomic_DNA"/>
</dbReference>
<dbReference type="RefSeq" id="WP_009943007.1">
    <property type="nucleotide sequence ID" value="NC_009142.1"/>
</dbReference>
<dbReference type="SMR" id="A4FBJ4"/>
<dbReference type="STRING" id="405948.SACE_2113"/>
<dbReference type="KEGG" id="sen:SACE_2113"/>
<dbReference type="eggNOG" id="COG0223">
    <property type="taxonomic scope" value="Bacteria"/>
</dbReference>
<dbReference type="HOGENOM" id="CLU_033347_1_1_11"/>
<dbReference type="OrthoDB" id="9802815at2"/>
<dbReference type="Proteomes" id="UP000006728">
    <property type="component" value="Chromosome"/>
</dbReference>
<dbReference type="GO" id="GO:0005829">
    <property type="term" value="C:cytosol"/>
    <property type="evidence" value="ECO:0007669"/>
    <property type="project" value="TreeGrafter"/>
</dbReference>
<dbReference type="GO" id="GO:0004479">
    <property type="term" value="F:methionyl-tRNA formyltransferase activity"/>
    <property type="evidence" value="ECO:0007669"/>
    <property type="project" value="UniProtKB-UniRule"/>
</dbReference>
<dbReference type="CDD" id="cd08646">
    <property type="entry name" value="FMT_core_Met-tRNA-FMT_N"/>
    <property type="match status" value="1"/>
</dbReference>
<dbReference type="CDD" id="cd08704">
    <property type="entry name" value="Met_tRNA_FMT_C"/>
    <property type="match status" value="1"/>
</dbReference>
<dbReference type="FunFam" id="3.40.50.12230:FF:000001">
    <property type="entry name" value="Methionyl-tRNA formyltransferase"/>
    <property type="match status" value="1"/>
</dbReference>
<dbReference type="Gene3D" id="3.40.50.12230">
    <property type="match status" value="1"/>
</dbReference>
<dbReference type="HAMAP" id="MF_00182">
    <property type="entry name" value="Formyl_trans"/>
    <property type="match status" value="1"/>
</dbReference>
<dbReference type="InterPro" id="IPR005794">
    <property type="entry name" value="Fmt"/>
</dbReference>
<dbReference type="InterPro" id="IPR005793">
    <property type="entry name" value="Formyl_trans_C"/>
</dbReference>
<dbReference type="InterPro" id="IPR002376">
    <property type="entry name" value="Formyl_transf_N"/>
</dbReference>
<dbReference type="InterPro" id="IPR036477">
    <property type="entry name" value="Formyl_transf_N_sf"/>
</dbReference>
<dbReference type="InterPro" id="IPR011034">
    <property type="entry name" value="Formyl_transferase-like_C_sf"/>
</dbReference>
<dbReference type="InterPro" id="IPR044135">
    <property type="entry name" value="Met-tRNA-FMT_C"/>
</dbReference>
<dbReference type="InterPro" id="IPR041711">
    <property type="entry name" value="Met-tRNA-FMT_N"/>
</dbReference>
<dbReference type="NCBIfam" id="TIGR00460">
    <property type="entry name" value="fmt"/>
    <property type="match status" value="1"/>
</dbReference>
<dbReference type="PANTHER" id="PTHR11138">
    <property type="entry name" value="METHIONYL-TRNA FORMYLTRANSFERASE"/>
    <property type="match status" value="1"/>
</dbReference>
<dbReference type="PANTHER" id="PTHR11138:SF5">
    <property type="entry name" value="METHIONYL-TRNA FORMYLTRANSFERASE, MITOCHONDRIAL"/>
    <property type="match status" value="1"/>
</dbReference>
<dbReference type="Pfam" id="PF02911">
    <property type="entry name" value="Formyl_trans_C"/>
    <property type="match status" value="1"/>
</dbReference>
<dbReference type="Pfam" id="PF00551">
    <property type="entry name" value="Formyl_trans_N"/>
    <property type="match status" value="1"/>
</dbReference>
<dbReference type="SUPFAM" id="SSF50486">
    <property type="entry name" value="FMT C-terminal domain-like"/>
    <property type="match status" value="1"/>
</dbReference>
<dbReference type="SUPFAM" id="SSF53328">
    <property type="entry name" value="Formyltransferase"/>
    <property type="match status" value="1"/>
</dbReference>
<keyword id="KW-0648">Protein biosynthesis</keyword>
<keyword id="KW-1185">Reference proteome</keyword>
<keyword id="KW-0808">Transferase</keyword>
<reference key="1">
    <citation type="journal article" date="2007" name="Nat. Biotechnol.">
        <title>Complete genome sequence of the erythromycin-producing bacterium Saccharopolyspora erythraea NRRL23338.</title>
        <authorList>
            <person name="Oliynyk M."/>
            <person name="Samborskyy M."/>
            <person name="Lester J.B."/>
            <person name="Mironenko T."/>
            <person name="Scott N."/>
            <person name="Dickens S."/>
            <person name="Haydock S.F."/>
            <person name="Leadlay P.F."/>
        </authorList>
    </citation>
    <scope>NUCLEOTIDE SEQUENCE [LARGE SCALE GENOMIC DNA]</scope>
    <source>
        <strain>ATCC 11635 / DSM 40517 / JCM 4748 / NBRC 13426 / NCIMB 8594 / NRRL 2338</strain>
    </source>
</reference>
<organism>
    <name type="scientific">Saccharopolyspora erythraea (strain ATCC 11635 / DSM 40517 / JCM 4748 / NBRC 13426 / NCIMB 8594 / NRRL 2338)</name>
    <dbReference type="NCBI Taxonomy" id="405948"/>
    <lineage>
        <taxon>Bacteria</taxon>
        <taxon>Bacillati</taxon>
        <taxon>Actinomycetota</taxon>
        <taxon>Actinomycetes</taxon>
        <taxon>Pseudonocardiales</taxon>
        <taxon>Pseudonocardiaceae</taxon>
        <taxon>Saccharopolyspora</taxon>
    </lineage>
</organism>
<comment type="function">
    <text evidence="1">Attaches a formyl group to the free amino group of methionyl-tRNA(fMet). The formyl group appears to play a dual role in the initiator identity of N-formylmethionyl-tRNA by promoting its recognition by IF2 and preventing the misappropriation of this tRNA by the elongation apparatus.</text>
</comment>
<comment type="catalytic activity">
    <reaction evidence="1">
        <text>L-methionyl-tRNA(fMet) + (6R)-10-formyltetrahydrofolate = N-formyl-L-methionyl-tRNA(fMet) + (6S)-5,6,7,8-tetrahydrofolate + H(+)</text>
        <dbReference type="Rhea" id="RHEA:24380"/>
        <dbReference type="Rhea" id="RHEA-COMP:9952"/>
        <dbReference type="Rhea" id="RHEA-COMP:9953"/>
        <dbReference type="ChEBI" id="CHEBI:15378"/>
        <dbReference type="ChEBI" id="CHEBI:57453"/>
        <dbReference type="ChEBI" id="CHEBI:78530"/>
        <dbReference type="ChEBI" id="CHEBI:78844"/>
        <dbReference type="ChEBI" id="CHEBI:195366"/>
        <dbReference type="EC" id="2.1.2.9"/>
    </reaction>
</comment>
<comment type="similarity">
    <text evidence="1">Belongs to the Fmt family.</text>
</comment>
<evidence type="ECO:0000255" key="1">
    <source>
        <dbReference type="HAMAP-Rule" id="MF_00182"/>
    </source>
</evidence>
<evidence type="ECO:0000256" key="2">
    <source>
        <dbReference type="SAM" id="MobiDB-lite"/>
    </source>
</evidence>
<accession>A4FBJ4</accession>
<gene>
    <name evidence="1" type="primary">fmt</name>
    <name type="ordered locus">SACE_2113</name>
</gene>
<name>FMT_SACEN</name>